<reference key="1">
    <citation type="journal article" date="1997" name="Science">
        <title>The complete genome sequence of Escherichia coli K-12.</title>
        <authorList>
            <person name="Blattner F.R."/>
            <person name="Plunkett G. III"/>
            <person name="Bloch C.A."/>
            <person name="Perna N.T."/>
            <person name="Burland V."/>
            <person name="Riley M."/>
            <person name="Collado-Vides J."/>
            <person name="Glasner J.D."/>
            <person name="Rode C.K."/>
            <person name="Mayhew G.F."/>
            <person name="Gregor J."/>
            <person name="Davis N.W."/>
            <person name="Kirkpatrick H.A."/>
            <person name="Goeden M.A."/>
            <person name="Rose D.J."/>
            <person name="Mau B."/>
            <person name="Shao Y."/>
        </authorList>
    </citation>
    <scope>NUCLEOTIDE SEQUENCE [LARGE SCALE GENOMIC DNA]</scope>
    <source>
        <strain>K12 / MG1655 / ATCC 47076</strain>
    </source>
</reference>
<reference key="2">
    <citation type="journal article" date="2006" name="Mol. Syst. Biol.">
        <title>Highly accurate genome sequences of Escherichia coli K-12 strains MG1655 and W3110.</title>
        <authorList>
            <person name="Hayashi K."/>
            <person name="Morooka N."/>
            <person name="Yamamoto Y."/>
            <person name="Fujita K."/>
            <person name="Isono K."/>
            <person name="Choi S."/>
            <person name="Ohtsubo E."/>
            <person name="Baba T."/>
            <person name="Wanner B.L."/>
            <person name="Mori H."/>
            <person name="Horiuchi T."/>
        </authorList>
    </citation>
    <scope>NUCLEOTIDE SEQUENCE [LARGE SCALE GENOMIC DNA]</scope>
    <source>
        <strain>K12 / W3110 / ATCC 27325 / DSM 5911</strain>
    </source>
</reference>
<name>YFDT_ECOLI</name>
<dbReference type="EMBL" id="U00096">
    <property type="protein sequence ID" value="AAC75422.1"/>
    <property type="molecule type" value="Genomic_DNA"/>
</dbReference>
<dbReference type="EMBL" id="AP009048">
    <property type="protein sequence ID" value="BAE76702.1"/>
    <property type="molecule type" value="Genomic_DNA"/>
</dbReference>
<dbReference type="PIR" id="H65009">
    <property type="entry name" value="H65009"/>
</dbReference>
<dbReference type="RefSeq" id="NP_416864.1">
    <property type="nucleotide sequence ID" value="NC_000913.3"/>
</dbReference>
<dbReference type="RefSeq" id="WP_000206809.1">
    <property type="nucleotide sequence ID" value="NZ_LN832404.1"/>
</dbReference>
<dbReference type="SMR" id="P76516"/>
<dbReference type="FunCoup" id="P76516">
    <property type="interactions" value="22"/>
</dbReference>
<dbReference type="STRING" id="511145.b2363"/>
<dbReference type="PaxDb" id="511145-b2363"/>
<dbReference type="EnsemblBacteria" id="AAC75422">
    <property type="protein sequence ID" value="AAC75422"/>
    <property type="gene ID" value="b2363"/>
</dbReference>
<dbReference type="GeneID" id="946836"/>
<dbReference type="KEGG" id="ecj:JW5887"/>
<dbReference type="KEGG" id="eco:b2363"/>
<dbReference type="KEGG" id="ecoc:C3026_13140"/>
<dbReference type="PATRIC" id="fig|511145.12.peg.2460"/>
<dbReference type="EchoBASE" id="EB3894"/>
<dbReference type="eggNOG" id="ENOG5033W8P">
    <property type="taxonomic scope" value="Bacteria"/>
</dbReference>
<dbReference type="HOGENOM" id="CLU_046529_10_3_6"/>
<dbReference type="InParanoid" id="P76516"/>
<dbReference type="OMA" id="DKEYMAW"/>
<dbReference type="OrthoDB" id="5678344at2"/>
<dbReference type="BioCyc" id="EcoCyc:G7232-MONOMER"/>
<dbReference type="PRO" id="PR:P76516"/>
<dbReference type="Proteomes" id="UP000000625">
    <property type="component" value="Chromosome"/>
</dbReference>
<gene>
    <name type="primary">yfdT</name>
    <name type="ordered locus">b2363</name>
    <name type="ordered locus">JW5887</name>
</gene>
<protein>
    <recommendedName>
        <fullName>Uncharacterized protein YfdT</fullName>
    </recommendedName>
</protein>
<sequence>MTTFTNKELIKEIKERISSLEVRDDIERRAYEIALVSLEVEPDEREAYELFMEKRFGDLVDRRRAKNGDNEYMAWDMTLGWIIWQQRAGIHFSTMSQQEVK</sequence>
<feature type="chain" id="PRO_0000169213" description="Uncharacterized protein YfdT">
    <location>
        <begin position="1"/>
        <end position="101"/>
    </location>
</feature>
<proteinExistence type="predicted"/>
<organism>
    <name type="scientific">Escherichia coli (strain K12)</name>
    <dbReference type="NCBI Taxonomy" id="83333"/>
    <lineage>
        <taxon>Bacteria</taxon>
        <taxon>Pseudomonadati</taxon>
        <taxon>Pseudomonadota</taxon>
        <taxon>Gammaproteobacteria</taxon>
        <taxon>Enterobacterales</taxon>
        <taxon>Enterobacteriaceae</taxon>
        <taxon>Escherichia</taxon>
    </lineage>
</organism>
<accession>P76516</accession>
<accession>Q2MAK4</accession>
<keyword id="KW-1185">Reference proteome</keyword>